<sequence>MGLFSFPKEEKLRKQEDFLRVLREGRPYSLSKSFIIYIRKGAEKRRIGISVNKKVGKAVVRNRIKRLIREVYRLHRPYLREDIEMLVIVKPGENIKDLDFHKVKDMLIKIWEKAGALKEQ</sequence>
<feature type="chain" id="PRO_1000194633" description="Ribonuclease P protein component">
    <location>
        <begin position="1"/>
        <end position="120"/>
    </location>
</feature>
<organism>
    <name type="scientific">Dictyoglomus thermophilum (strain ATCC 35947 / DSM 3960 / H-6-12)</name>
    <dbReference type="NCBI Taxonomy" id="309799"/>
    <lineage>
        <taxon>Bacteria</taxon>
        <taxon>Pseudomonadati</taxon>
        <taxon>Dictyoglomota</taxon>
        <taxon>Dictyoglomia</taxon>
        <taxon>Dictyoglomales</taxon>
        <taxon>Dictyoglomaceae</taxon>
        <taxon>Dictyoglomus</taxon>
    </lineage>
</organism>
<evidence type="ECO:0000255" key="1">
    <source>
        <dbReference type="HAMAP-Rule" id="MF_00227"/>
    </source>
</evidence>
<accession>B5YBN8</accession>
<keyword id="KW-0255">Endonuclease</keyword>
<keyword id="KW-0378">Hydrolase</keyword>
<keyword id="KW-0540">Nuclease</keyword>
<keyword id="KW-0694">RNA-binding</keyword>
<keyword id="KW-0819">tRNA processing</keyword>
<protein>
    <recommendedName>
        <fullName evidence="1">Ribonuclease P protein component</fullName>
        <shortName evidence="1">RNase P protein</shortName>
        <shortName evidence="1">RNaseP protein</shortName>
        <ecNumber evidence="1">3.1.26.5</ecNumber>
    </recommendedName>
    <alternativeName>
        <fullName evidence="1">Protein C5</fullName>
    </alternativeName>
</protein>
<dbReference type="EC" id="3.1.26.5" evidence="1"/>
<dbReference type="EMBL" id="CP001146">
    <property type="protein sequence ID" value="ACI19765.1"/>
    <property type="molecule type" value="Genomic_DNA"/>
</dbReference>
<dbReference type="RefSeq" id="WP_012548397.1">
    <property type="nucleotide sequence ID" value="NC_011297.1"/>
</dbReference>
<dbReference type="SMR" id="B5YBN8"/>
<dbReference type="STRING" id="309799.DICTH_1848"/>
<dbReference type="PaxDb" id="309799-DICTH_1848"/>
<dbReference type="KEGG" id="dth:DICTH_1848"/>
<dbReference type="eggNOG" id="COG0594">
    <property type="taxonomic scope" value="Bacteria"/>
</dbReference>
<dbReference type="HOGENOM" id="CLU_117179_9_2_0"/>
<dbReference type="OrthoDB" id="9810867at2"/>
<dbReference type="Proteomes" id="UP000001733">
    <property type="component" value="Chromosome"/>
</dbReference>
<dbReference type="GO" id="GO:0030677">
    <property type="term" value="C:ribonuclease P complex"/>
    <property type="evidence" value="ECO:0007669"/>
    <property type="project" value="TreeGrafter"/>
</dbReference>
<dbReference type="GO" id="GO:0042781">
    <property type="term" value="F:3'-tRNA processing endoribonuclease activity"/>
    <property type="evidence" value="ECO:0007669"/>
    <property type="project" value="TreeGrafter"/>
</dbReference>
<dbReference type="GO" id="GO:0004526">
    <property type="term" value="F:ribonuclease P activity"/>
    <property type="evidence" value="ECO:0007669"/>
    <property type="project" value="UniProtKB-UniRule"/>
</dbReference>
<dbReference type="GO" id="GO:0000049">
    <property type="term" value="F:tRNA binding"/>
    <property type="evidence" value="ECO:0007669"/>
    <property type="project" value="UniProtKB-UniRule"/>
</dbReference>
<dbReference type="GO" id="GO:0001682">
    <property type="term" value="P:tRNA 5'-leader removal"/>
    <property type="evidence" value="ECO:0007669"/>
    <property type="project" value="UniProtKB-UniRule"/>
</dbReference>
<dbReference type="FunFam" id="3.30.230.10:FF:000021">
    <property type="entry name" value="Ribonuclease P protein component"/>
    <property type="match status" value="1"/>
</dbReference>
<dbReference type="Gene3D" id="3.30.230.10">
    <property type="match status" value="1"/>
</dbReference>
<dbReference type="HAMAP" id="MF_00227">
    <property type="entry name" value="RNase_P"/>
    <property type="match status" value="1"/>
</dbReference>
<dbReference type="InterPro" id="IPR020568">
    <property type="entry name" value="Ribosomal_Su5_D2-typ_SF"/>
</dbReference>
<dbReference type="InterPro" id="IPR014721">
    <property type="entry name" value="Ribsml_uS5_D2-typ_fold_subgr"/>
</dbReference>
<dbReference type="InterPro" id="IPR000100">
    <property type="entry name" value="RNase_P"/>
</dbReference>
<dbReference type="InterPro" id="IPR020539">
    <property type="entry name" value="RNase_P_CS"/>
</dbReference>
<dbReference type="NCBIfam" id="TIGR00188">
    <property type="entry name" value="rnpA"/>
    <property type="match status" value="1"/>
</dbReference>
<dbReference type="PANTHER" id="PTHR33992">
    <property type="entry name" value="RIBONUCLEASE P PROTEIN COMPONENT"/>
    <property type="match status" value="1"/>
</dbReference>
<dbReference type="PANTHER" id="PTHR33992:SF1">
    <property type="entry name" value="RIBONUCLEASE P PROTEIN COMPONENT"/>
    <property type="match status" value="1"/>
</dbReference>
<dbReference type="Pfam" id="PF00825">
    <property type="entry name" value="Ribonuclease_P"/>
    <property type="match status" value="1"/>
</dbReference>
<dbReference type="SUPFAM" id="SSF54211">
    <property type="entry name" value="Ribosomal protein S5 domain 2-like"/>
    <property type="match status" value="1"/>
</dbReference>
<dbReference type="PROSITE" id="PS00648">
    <property type="entry name" value="RIBONUCLEASE_P"/>
    <property type="match status" value="1"/>
</dbReference>
<proteinExistence type="inferred from homology"/>
<comment type="function">
    <text evidence="1">RNaseP catalyzes the removal of the 5'-leader sequence from pre-tRNA to produce the mature 5'-terminus. It can also cleave other RNA substrates such as 4.5S RNA. The protein component plays an auxiliary but essential role in vivo by binding to the 5'-leader sequence and broadening the substrate specificity of the ribozyme.</text>
</comment>
<comment type="catalytic activity">
    <reaction evidence="1">
        <text>Endonucleolytic cleavage of RNA, removing 5'-extranucleotides from tRNA precursor.</text>
        <dbReference type="EC" id="3.1.26.5"/>
    </reaction>
</comment>
<comment type="subunit">
    <text evidence="1">Consists of a catalytic RNA component (M1 or rnpB) and a protein subunit.</text>
</comment>
<comment type="similarity">
    <text evidence="1">Belongs to the RnpA family.</text>
</comment>
<reference key="1">
    <citation type="journal article" date="2014" name="Genome Announc.">
        <title>Complete Genome Sequence of the Extreme Thermophile Dictyoglomus thermophilum H-6-12.</title>
        <authorList>
            <person name="Coil D.A."/>
            <person name="Badger J.H."/>
            <person name="Forberger H.C."/>
            <person name="Riggs F."/>
            <person name="Madupu R."/>
            <person name="Fedorova N."/>
            <person name="Ward N."/>
            <person name="Robb F.T."/>
            <person name="Eisen J.A."/>
        </authorList>
    </citation>
    <scope>NUCLEOTIDE SEQUENCE [LARGE SCALE GENOMIC DNA]</scope>
    <source>
        <strain>ATCC 35947 / DSM 3960 / H-6-12</strain>
    </source>
</reference>
<name>RNPA_DICT6</name>
<gene>
    <name evidence="1" type="primary">rnpA</name>
    <name type="ordered locus">DICTH_1848</name>
</gene>